<comment type="function">
    <text evidence="1">Binds the lower part of the 30S subunit head. Binds mRNA in the 70S ribosome, positioning it for translation.</text>
</comment>
<comment type="subunit">
    <text evidence="1">Part of the 30S ribosomal subunit. Forms a tight complex with proteins S10 and S14.</text>
</comment>
<comment type="similarity">
    <text evidence="1">Belongs to the universal ribosomal protein uS3 family.</text>
</comment>
<proteinExistence type="inferred from homology"/>
<dbReference type="EMBL" id="CP000262">
    <property type="protein sequence ID" value="ABF37003.1"/>
    <property type="molecule type" value="Genomic_DNA"/>
</dbReference>
<dbReference type="SMR" id="Q1J908"/>
<dbReference type="KEGG" id="spi:MGAS10750_Spy0053"/>
<dbReference type="HOGENOM" id="CLU_058591_0_2_9"/>
<dbReference type="Proteomes" id="UP000002434">
    <property type="component" value="Chromosome"/>
</dbReference>
<dbReference type="GO" id="GO:0022627">
    <property type="term" value="C:cytosolic small ribosomal subunit"/>
    <property type="evidence" value="ECO:0007669"/>
    <property type="project" value="TreeGrafter"/>
</dbReference>
<dbReference type="GO" id="GO:0003729">
    <property type="term" value="F:mRNA binding"/>
    <property type="evidence" value="ECO:0007669"/>
    <property type="project" value="UniProtKB-UniRule"/>
</dbReference>
<dbReference type="GO" id="GO:0019843">
    <property type="term" value="F:rRNA binding"/>
    <property type="evidence" value="ECO:0007669"/>
    <property type="project" value="UniProtKB-UniRule"/>
</dbReference>
<dbReference type="GO" id="GO:0003735">
    <property type="term" value="F:structural constituent of ribosome"/>
    <property type="evidence" value="ECO:0007669"/>
    <property type="project" value="InterPro"/>
</dbReference>
<dbReference type="GO" id="GO:0006412">
    <property type="term" value="P:translation"/>
    <property type="evidence" value="ECO:0007669"/>
    <property type="project" value="UniProtKB-UniRule"/>
</dbReference>
<dbReference type="CDD" id="cd02412">
    <property type="entry name" value="KH-II_30S_S3"/>
    <property type="match status" value="1"/>
</dbReference>
<dbReference type="FunFam" id="3.30.1140.32:FF:000001">
    <property type="entry name" value="30S ribosomal protein S3"/>
    <property type="match status" value="1"/>
</dbReference>
<dbReference type="FunFam" id="3.30.300.20:FF:000001">
    <property type="entry name" value="30S ribosomal protein S3"/>
    <property type="match status" value="1"/>
</dbReference>
<dbReference type="Gene3D" id="3.30.300.20">
    <property type="match status" value="1"/>
</dbReference>
<dbReference type="Gene3D" id="3.30.1140.32">
    <property type="entry name" value="Ribosomal protein S3, C-terminal domain"/>
    <property type="match status" value="1"/>
</dbReference>
<dbReference type="HAMAP" id="MF_01309_B">
    <property type="entry name" value="Ribosomal_uS3_B"/>
    <property type="match status" value="1"/>
</dbReference>
<dbReference type="InterPro" id="IPR004087">
    <property type="entry name" value="KH_dom"/>
</dbReference>
<dbReference type="InterPro" id="IPR015946">
    <property type="entry name" value="KH_dom-like_a/b"/>
</dbReference>
<dbReference type="InterPro" id="IPR004044">
    <property type="entry name" value="KH_dom_type_2"/>
</dbReference>
<dbReference type="InterPro" id="IPR009019">
    <property type="entry name" value="KH_sf_prok-type"/>
</dbReference>
<dbReference type="InterPro" id="IPR036419">
    <property type="entry name" value="Ribosomal_S3_C_sf"/>
</dbReference>
<dbReference type="InterPro" id="IPR005704">
    <property type="entry name" value="Ribosomal_uS3_bac-typ"/>
</dbReference>
<dbReference type="InterPro" id="IPR001351">
    <property type="entry name" value="Ribosomal_uS3_C"/>
</dbReference>
<dbReference type="InterPro" id="IPR018280">
    <property type="entry name" value="Ribosomal_uS3_CS"/>
</dbReference>
<dbReference type="NCBIfam" id="TIGR01009">
    <property type="entry name" value="rpsC_bact"/>
    <property type="match status" value="1"/>
</dbReference>
<dbReference type="PANTHER" id="PTHR11760">
    <property type="entry name" value="30S/40S RIBOSOMAL PROTEIN S3"/>
    <property type="match status" value="1"/>
</dbReference>
<dbReference type="PANTHER" id="PTHR11760:SF19">
    <property type="entry name" value="SMALL RIBOSOMAL SUBUNIT PROTEIN US3C"/>
    <property type="match status" value="1"/>
</dbReference>
<dbReference type="Pfam" id="PF07650">
    <property type="entry name" value="KH_2"/>
    <property type="match status" value="1"/>
</dbReference>
<dbReference type="Pfam" id="PF00189">
    <property type="entry name" value="Ribosomal_S3_C"/>
    <property type="match status" value="1"/>
</dbReference>
<dbReference type="SMART" id="SM00322">
    <property type="entry name" value="KH"/>
    <property type="match status" value="1"/>
</dbReference>
<dbReference type="SUPFAM" id="SSF54814">
    <property type="entry name" value="Prokaryotic type KH domain (KH-domain type II)"/>
    <property type="match status" value="1"/>
</dbReference>
<dbReference type="SUPFAM" id="SSF54821">
    <property type="entry name" value="Ribosomal protein S3 C-terminal domain"/>
    <property type="match status" value="1"/>
</dbReference>
<dbReference type="PROSITE" id="PS50823">
    <property type="entry name" value="KH_TYPE_2"/>
    <property type="match status" value="1"/>
</dbReference>
<dbReference type="PROSITE" id="PS00548">
    <property type="entry name" value="RIBOSOMAL_S3"/>
    <property type="match status" value="1"/>
</dbReference>
<accession>Q1J908</accession>
<keyword id="KW-0687">Ribonucleoprotein</keyword>
<keyword id="KW-0689">Ribosomal protein</keyword>
<keyword id="KW-0694">RNA-binding</keyword>
<keyword id="KW-0699">rRNA-binding</keyword>
<gene>
    <name evidence="1" type="primary">rpsC</name>
    <name type="ordered locus">MGAS10750_Spy0053</name>
</gene>
<feature type="chain" id="PRO_0000293897" description="Small ribosomal subunit protein uS3">
    <location>
        <begin position="1"/>
        <end position="217"/>
    </location>
</feature>
<feature type="domain" description="KH type-2" evidence="1">
    <location>
        <begin position="38"/>
        <end position="106"/>
    </location>
</feature>
<sequence>MGQKVHPIGMRVGIIRDWDAKWYAEKEYADYLHEDLAIRKFINKELADASVSTIEIERAVNKVIVSLHTAKPGMVIGKGGANVDALRGQLNKLTGKQVHINIIEIKQPDLDAHLVGENIARQLEQRVAFRRAQKQAIQRTMRAGAKGIKTQVSGRLNGADIARAEGYSEGTVPLHTLRADIDYAWEEADTTYGKLGVKVWIYRGEVLPARKNTKGGK</sequence>
<reference key="1">
    <citation type="journal article" date="2006" name="Proc. Natl. Acad. Sci. U.S.A.">
        <title>Molecular genetic anatomy of inter- and intraserotype variation in the human bacterial pathogen group A Streptococcus.</title>
        <authorList>
            <person name="Beres S.B."/>
            <person name="Richter E.W."/>
            <person name="Nagiec M.J."/>
            <person name="Sumby P."/>
            <person name="Porcella S.F."/>
            <person name="DeLeo F.R."/>
            <person name="Musser J.M."/>
        </authorList>
    </citation>
    <scope>NUCLEOTIDE SEQUENCE [LARGE SCALE GENOMIC DNA]</scope>
    <source>
        <strain>MGAS10750</strain>
    </source>
</reference>
<organism>
    <name type="scientific">Streptococcus pyogenes serotype M4 (strain MGAS10750)</name>
    <dbReference type="NCBI Taxonomy" id="370554"/>
    <lineage>
        <taxon>Bacteria</taxon>
        <taxon>Bacillati</taxon>
        <taxon>Bacillota</taxon>
        <taxon>Bacilli</taxon>
        <taxon>Lactobacillales</taxon>
        <taxon>Streptococcaceae</taxon>
        <taxon>Streptococcus</taxon>
    </lineage>
</organism>
<name>RS3_STRPF</name>
<protein>
    <recommendedName>
        <fullName evidence="1">Small ribosomal subunit protein uS3</fullName>
    </recommendedName>
    <alternativeName>
        <fullName evidence="2">30S ribosomal protein S3</fullName>
    </alternativeName>
</protein>
<evidence type="ECO:0000255" key="1">
    <source>
        <dbReference type="HAMAP-Rule" id="MF_01309"/>
    </source>
</evidence>
<evidence type="ECO:0000305" key="2"/>